<protein>
    <recommendedName>
        <fullName>Mitochondrial Rho GTPase 2</fullName>
        <shortName>MIRO-2</shortName>
        <ecNumber evidence="2">3.6.5.-</ecNumber>
    </recommendedName>
    <alternativeName>
        <fullName>Ras homolog gene family member T2</fullName>
    </alternativeName>
</protein>
<sequence length="620" mass="67619">MKRDVRILLLGEAQVGKTSLILSLVGEEFPEEVPPRAEEITIPADVTPEKVPTHIVDYSEAEQTAEELQDEIQKASVVCVVYDVSEETTVEKIRTKWIPLVNGGTRRGPRVPIILVGNKSDLRPGGSMEAVLPIMSQFPEIETCVECSAKNLKNISELFYYAQKAVLHPTAPLYDPEAKQLRPACAQALTRIFRLSDQDMDQALSDQELNAFQTCCFGHPLAPQALEDVKLVVSRNVAGGVQDDRLTLDGFLFLNTLFIQRGRHETTWTILRRFGYSDSLELTPDYLFPALHVPPGCSAELNHHGYQFAQRMLEKHDQDRDGALSPAELESLFSVFPGPPWGPQLPRHRPHRGRSAAPARVPLPVDPGDLLGRPALSRAPWLPGLPHPLRAGLAGARHHSHQGEEAGPGKGQTQRNVLLCKVLGARGVGKSSFLRAFLGRGLGDARGPPEEPSVYAIDTVRVGGQEKYLILCEVAADSLLTAEADASCDVACLMFDSSDPGSFALCASVYKRHYMDGQIPCLFISSKADLPEGLSPPGLSPSEFCRRHRLPAPTLFSCAGPAEPSTAVFARLATMATFPHLVHGELHTTSFWLRVALGAVGAAVAAILSFSLYRVLVKSR</sequence>
<proteinExistence type="evidence at transcript level"/>
<gene>
    <name type="primary">RHOT2</name>
    <name type="synonym">ARHT2</name>
</gene>
<evidence type="ECO:0000250" key="1">
    <source>
        <dbReference type="UniProtKB" id="Q8IXI1"/>
    </source>
</evidence>
<evidence type="ECO:0000250" key="2">
    <source>
        <dbReference type="UniProtKB" id="Q8IXI2"/>
    </source>
</evidence>
<evidence type="ECO:0000250" key="3">
    <source>
        <dbReference type="UniProtKB" id="Q8JZN7"/>
    </source>
</evidence>
<evidence type="ECO:0000255" key="4"/>
<evidence type="ECO:0000255" key="5">
    <source>
        <dbReference type="PROSITE-ProRule" id="PRU00448"/>
    </source>
</evidence>
<evidence type="ECO:0000255" key="6">
    <source>
        <dbReference type="PROSITE-ProRule" id="PRU00757"/>
    </source>
</evidence>
<evidence type="ECO:0000256" key="7">
    <source>
        <dbReference type="SAM" id="MobiDB-lite"/>
    </source>
</evidence>
<evidence type="ECO:0000305" key="8"/>
<feature type="chain" id="PRO_0000239320" description="Mitochondrial Rho GTPase 2">
    <location>
        <begin position="1"/>
        <end position="620"/>
    </location>
</feature>
<feature type="topological domain" description="Cytoplasmic" evidence="4">
    <location>
        <begin position="1"/>
        <end position="594"/>
    </location>
</feature>
<feature type="transmembrane region" description="Helical; Anchor for type IV membrane protein" evidence="4">
    <location>
        <begin position="595"/>
        <end position="617"/>
    </location>
</feature>
<feature type="topological domain" description="Mitochondrial intermembrane" evidence="4">
    <location>
        <begin position="618"/>
        <end position="620"/>
    </location>
</feature>
<feature type="domain" description="Miro 1" evidence="6">
    <location>
        <begin position="2"/>
        <end position="168"/>
    </location>
</feature>
<feature type="domain" description="EF-hand 1" evidence="5">
    <location>
        <begin position="184"/>
        <end position="219"/>
    </location>
</feature>
<feature type="domain" description="EF-hand 2" evidence="5">
    <location>
        <begin position="304"/>
        <end position="339"/>
    </location>
</feature>
<feature type="domain" description="Miro 2" evidence="6">
    <location>
        <begin position="415"/>
        <end position="578"/>
    </location>
</feature>
<feature type="region of interest" description="Disordered" evidence="7">
    <location>
        <begin position="340"/>
        <end position="364"/>
    </location>
</feature>
<feature type="binding site" evidence="2">
    <location>
        <position position="16"/>
    </location>
    <ligand>
        <name>GTP</name>
        <dbReference type="ChEBI" id="CHEBI:37565"/>
        <label>1</label>
    </ligand>
</feature>
<feature type="binding site" evidence="2">
    <location>
        <position position="17"/>
    </location>
    <ligand>
        <name>GTP</name>
        <dbReference type="ChEBI" id="CHEBI:37565"/>
        <label>1</label>
    </ligand>
</feature>
<feature type="binding site" evidence="2">
    <location>
        <position position="18"/>
    </location>
    <ligand>
        <name>GTP</name>
        <dbReference type="ChEBI" id="CHEBI:37565"/>
        <label>1</label>
    </ligand>
</feature>
<feature type="binding site" evidence="2">
    <location>
        <position position="18"/>
    </location>
    <ligand>
        <name>Mg(2+)</name>
        <dbReference type="ChEBI" id="CHEBI:18420"/>
        <label>1</label>
    </ligand>
</feature>
<feature type="binding site" evidence="2">
    <location>
        <position position="19"/>
    </location>
    <ligand>
        <name>GTP</name>
        <dbReference type="ChEBI" id="CHEBI:37565"/>
        <label>1</label>
    </ligand>
</feature>
<feature type="binding site" evidence="2">
    <location>
        <position position="35"/>
    </location>
    <ligand>
        <name>Mg(2+)</name>
        <dbReference type="ChEBI" id="CHEBI:18420"/>
        <label>1</label>
    </ligand>
</feature>
<feature type="binding site" evidence="2">
    <location>
        <position position="57"/>
    </location>
    <ligand>
        <name>Mg(2+)</name>
        <dbReference type="ChEBI" id="CHEBI:18420"/>
        <label>1</label>
    </ligand>
</feature>
<feature type="binding site" evidence="2">
    <location>
        <position position="59"/>
    </location>
    <ligand>
        <name>GTP</name>
        <dbReference type="ChEBI" id="CHEBI:37565"/>
        <label>1</label>
    </ligand>
</feature>
<feature type="binding site" evidence="2">
    <location>
        <position position="118"/>
    </location>
    <ligand>
        <name>GTP</name>
        <dbReference type="ChEBI" id="CHEBI:37565"/>
        <label>1</label>
    </ligand>
</feature>
<feature type="binding site" evidence="2">
    <location>
        <position position="119"/>
    </location>
    <ligand>
        <name>GTP</name>
        <dbReference type="ChEBI" id="CHEBI:37565"/>
        <label>1</label>
    </ligand>
</feature>
<feature type="binding site" evidence="2">
    <location>
        <position position="121"/>
    </location>
    <ligand>
        <name>GTP</name>
        <dbReference type="ChEBI" id="CHEBI:37565"/>
        <label>1</label>
    </ligand>
</feature>
<feature type="binding site" evidence="2">
    <location>
        <position position="149"/>
    </location>
    <ligand>
        <name>GTP</name>
        <dbReference type="ChEBI" id="CHEBI:37565"/>
        <label>1</label>
    </ligand>
</feature>
<feature type="binding site" evidence="2">
    <location>
        <position position="150"/>
    </location>
    <ligand>
        <name>GTP</name>
        <dbReference type="ChEBI" id="CHEBI:37565"/>
        <label>1</label>
    </ligand>
</feature>
<feature type="binding site" evidence="5">
    <location>
        <position position="197"/>
    </location>
    <ligand>
        <name>Ca(2+)</name>
        <dbReference type="ChEBI" id="CHEBI:29108"/>
        <label>1</label>
    </ligand>
</feature>
<feature type="binding site" evidence="5">
    <location>
        <position position="199"/>
    </location>
    <ligand>
        <name>Ca(2+)</name>
        <dbReference type="ChEBI" id="CHEBI:29108"/>
        <label>1</label>
    </ligand>
</feature>
<feature type="binding site" evidence="5">
    <location>
        <position position="201"/>
    </location>
    <ligand>
        <name>Ca(2+)</name>
        <dbReference type="ChEBI" id="CHEBI:29108"/>
        <label>1</label>
    </ligand>
</feature>
<feature type="binding site" evidence="5">
    <location>
        <position position="208"/>
    </location>
    <ligand>
        <name>Ca(2+)</name>
        <dbReference type="ChEBI" id="CHEBI:29108"/>
        <label>1</label>
    </ligand>
</feature>
<feature type="binding site" evidence="5">
    <location>
        <position position="317"/>
    </location>
    <ligand>
        <name>Ca(2+)</name>
        <dbReference type="ChEBI" id="CHEBI:29108"/>
        <label>2</label>
    </ligand>
</feature>
<feature type="binding site" evidence="5">
    <location>
        <position position="319"/>
    </location>
    <ligand>
        <name>Ca(2+)</name>
        <dbReference type="ChEBI" id="CHEBI:29108"/>
        <label>2</label>
    </ligand>
</feature>
<feature type="binding site" evidence="5">
    <location>
        <position position="321"/>
    </location>
    <ligand>
        <name>Ca(2+)</name>
        <dbReference type="ChEBI" id="CHEBI:29108"/>
        <label>2</label>
    </ligand>
</feature>
<feature type="binding site" evidence="5">
    <location>
        <position position="328"/>
    </location>
    <ligand>
        <name>Ca(2+)</name>
        <dbReference type="ChEBI" id="CHEBI:29108"/>
        <label>2</label>
    </ligand>
</feature>
<feature type="binding site" evidence="1">
    <location>
        <position position="427"/>
    </location>
    <ligand>
        <name>GTP</name>
        <dbReference type="ChEBI" id="CHEBI:37565"/>
        <label>2</label>
    </ligand>
</feature>
<feature type="binding site" evidence="1">
    <location>
        <position position="429"/>
    </location>
    <ligand>
        <name>GTP</name>
        <dbReference type="ChEBI" id="CHEBI:37565"/>
        <label>2</label>
    </ligand>
</feature>
<feature type="binding site" evidence="1">
    <location>
        <position position="430"/>
    </location>
    <ligand>
        <name>GTP</name>
        <dbReference type="ChEBI" id="CHEBI:37565"/>
        <label>2</label>
    </ligand>
</feature>
<feature type="binding site" evidence="1">
    <location>
        <position position="431"/>
    </location>
    <ligand>
        <name>GTP</name>
        <dbReference type="ChEBI" id="CHEBI:37565"/>
        <label>2</label>
    </ligand>
</feature>
<feature type="binding site" evidence="1">
    <location>
        <position position="431"/>
    </location>
    <ligand>
        <name>Mg(2+)</name>
        <dbReference type="ChEBI" id="CHEBI:18420"/>
        <label>2</label>
    </ligand>
</feature>
<feature type="binding site" evidence="1">
    <location>
        <position position="473"/>
    </location>
    <ligand>
        <name>Mg(2+)</name>
        <dbReference type="ChEBI" id="CHEBI:18420"/>
        <label>2</label>
    </ligand>
</feature>
<feature type="binding site" evidence="1">
    <location>
        <position position="527"/>
    </location>
    <ligand>
        <name>GTP</name>
        <dbReference type="ChEBI" id="CHEBI:37565"/>
        <label>2</label>
    </ligand>
</feature>
<feature type="binding site" evidence="1">
    <location>
        <position position="529"/>
    </location>
    <ligand>
        <name>GTP</name>
        <dbReference type="ChEBI" id="CHEBI:37565"/>
        <label>2</label>
    </ligand>
</feature>
<feature type="binding site" evidence="1">
    <location>
        <position position="558"/>
    </location>
    <ligand>
        <name>GTP</name>
        <dbReference type="ChEBI" id="CHEBI:37565"/>
        <label>2</label>
    </ligand>
</feature>
<feature type="cross-link" description="Glycyl lysine isopeptide (Lys-Gly) (interchain with G-Cter in ubiquitin)" evidence="1">
    <location>
        <position position="96"/>
    </location>
</feature>
<feature type="cross-link" description="Glycyl lysine isopeptide (Lys-Gly) (interchain with G-Cter in ubiquitin)" evidence="1">
    <location>
        <position position="119"/>
    </location>
</feature>
<feature type="cross-link" description="Glycyl lysine isopeptide (Lys-Gly) (interchain with G-Cter in ubiquitin)" evidence="1">
    <location>
        <position position="164"/>
    </location>
</feature>
<accession>Q864R5</accession>
<dbReference type="EC" id="3.6.5.-" evidence="2"/>
<dbReference type="EMBL" id="AY247739">
    <property type="protein sequence ID" value="AAP04408.1"/>
    <property type="molecule type" value="mRNA"/>
</dbReference>
<dbReference type="RefSeq" id="NP_999490.1">
    <property type="nucleotide sequence ID" value="NM_214325.1"/>
</dbReference>
<dbReference type="SMR" id="Q864R5"/>
<dbReference type="FunCoup" id="Q864R5">
    <property type="interactions" value="1406"/>
</dbReference>
<dbReference type="PaxDb" id="9823-ENSSSCP00000008541"/>
<dbReference type="PeptideAtlas" id="Q864R5"/>
<dbReference type="GeneID" id="397596"/>
<dbReference type="KEGG" id="ssc:397596"/>
<dbReference type="CTD" id="89941"/>
<dbReference type="eggNOG" id="KOG1707">
    <property type="taxonomic scope" value="Eukaryota"/>
</dbReference>
<dbReference type="InParanoid" id="Q864R5"/>
<dbReference type="OrthoDB" id="10020961at2759"/>
<dbReference type="Proteomes" id="UP000008227">
    <property type="component" value="Unplaced"/>
</dbReference>
<dbReference type="Proteomes" id="UP000314985">
    <property type="component" value="Unplaced"/>
</dbReference>
<dbReference type="Proteomes" id="UP000694570">
    <property type="component" value="Unplaced"/>
</dbReference>
<dbReference type="Proteomes" id="UP000694571">
    <property type="component" value="Unplaced"/>
</dbReference>
<dbReference type="Proteomes" id="UP000694720">
    <property type="component" value="Unplaced"/>
</dbReference>
<dbReference type="Proteomes" id="UP000694722">
    <property type="component" value="Unplaced"/>
</dbReference>
<dbReference type="Proteomes" id="UP000694723">
    <property type="component" value="Unplaced"/>
</dbReference>
<dbReference type="Proteomes" id="UP000694724">
    <property type="component" value="Unplaced"/>
</dbReference>
<dbReference type="Proteomes" id="UP000694725">
    <property type="component" value="Unplaced"/>
</dbReference>
<dbReference type="Proteomes" id="UP000694726">
    <property type="component" value="Unplaced"/>
</dbReference>
<dbReference type="Proteomes" id="UP000694727">
    <property type="component" value="Unplaced"/>
</dbReference>
<dbReference type="Proteomes" id="UP000694728">
    <property type="component" value="Unplaced"/>
</dbReference>
<dbReference type="GO" id="GO:0005741">
    <property type="term" value="C:mitochondrial outer membrane"/>
    <property type="evidence" value="ECO:0000250"/>
    <property type="project" value="UniProtKB"/>
</dbReference>
<dbReference type="GO" id="GO:0005509">
    <property type="term" value="F:calcium ion binding"/>
    <property type="evidence" value="ECO:0007669"/>
    <property type="project" value="InterPro"/>
</dbReference>
<dbReference type="GO" id="GO:0005525">
    <property type="term" value="F:GTP binding"/>
    <property type="evidence" value="ECO:0000318"/>
    <property type="project" value="GO_Central"/>
</dbReference>
<dbReference type="GO" id="GO:0003924">
    <property type="term" value="F:GTPase activity"/>
    <property type="evidence" value="ECO:0000318"/>
    <property type="project" value="GO_Central"/>
</dbReference>
<dbReference type="GO" id="GO:0019725">
    <property type="term" value="P:cellular homeostasis"/>
    <property type="evidence" value="ECO:0000250"/>
    <property type="project" value="UniProtKB"/>
</dbReference>
<dbReference type="GO" id="GO:0097345">
    <property type="term" value="P:mitochondrial outer membrane permeabilization"/>
    <property type="evidence" value="ECO:0000250"/>
    <property type="project" value="UniProtKB"/>
</dbReference>
<dbReference type="GO" id="GO:0007005">
    <property type="term" value="P:mitochondrion organization"/>
    <property type="evidence" value="ECO:0000318"/>
    <property type="project" value="GO_Central"/>
</dbReference>
<dbReference type="GO" id="GO:0047497">
    <property type="term" value="P:mitochondrion transport along microtubule"/>
    <property type="evidence" value="ECO:0000250"/>
    <property type="project" value="UniProtKB"/>
</dbReference>
<dbReference type="CDD" id="cd01893">
    <property type="entry name" value="Miro1"/>
    <property type="match status" value="1"/>
</dbReference>
<dbReference type="CDD" id="cd01892">
    <property type="entry name" value="Miro2"/>
    <property type="match status" value="1"/>
</dbReference>
<dbReference type="FunFam" id="1.10.238.10:FF:000011">
    <property type="entry name" value="Mitochondrial Rho GTPase"/>
    <property type="match status" value="1"/>
</dbReference>
<dbReference type="FunFam" id="3.40.50.300:FF:000170">
    <property type="entry name" value="Mitochondrial Rho GTPase"/>
    <property type="match status" value="1"/>
</dbReference>
<dbReference type="FunFam" id="3.40.50.300:FF:001117">
    <property type="entry name" value="Mitochondrial Rho GTPase 2"/>
    <property type="match status" value="1"/>
</dbReference>
<dbReference type="Gene3D" id="1.10.238.10">
    <property type="entry name" value="EF-hand"/>
    <property type="match status" value="3"/>
</dbReference>
<dbReference type="Gene3D" id="3.40.50.300">
    <property type="entry name" value="P-loop containing nucleotide triphosphate hydrolases"/>
    <property type="match status" value="2"/>
</dbReference>
<dbReference type="InterPro" id="IPR011992">
    <property type="entry name" value="EF-hand-dom_pair"/>
</dbReference>
<dbReference type="InterPro" id="IPR018247">
    <property type="entry name" value="EF_Hand_1_Ca_BS"/>
</dbReference>
<dbReference type="InterPro" id="IPR013567">
    <property type="entry name" value="EF_hand_assoc_2"/>
</dbReference>
<dbReference type="InterPro" id="IPR002048">
    <property type="entry name" value="EF_hand_dom"/>
</dbReference>
<dbReference type="InterPro" id="IPR021181">
    <property type="entry name" value="Miro"/>
</dbReference>
<dbReference type="InterPro" id="IPR052266">
    <property type="entry name" value="Miro-EF-hand_domain"/>
</dbReference>
<dbReference type="InterPro" id="IPR020860">
    <property type="entry name" value="MIRO_dom"/>
</dbReference>
<dbReference type="InterPro" id="IPR027417">
    <property type="entry name" value="P-loop_NTPase"/>
</dbReference>
<dbReference type="InterPro" id="IPR001806">
    <property type="entry name" value="Small_GTPase"/>
</dbReference>
<dbReference type="PANTHER" id="PTHR46819">
    <property type="entry name" value="EF-HAND CALCIUM-BINDING DOMAIN-CONTAINING PROTEIN 7"/>
    <property type="match status" value="1"/>
</dbReference>
<dbReference type="PANTHER" id="PTHR46819:SF1">
    <property type="entry name" value="EF-HAND CALCIUM-BINDING DOMAIN-CONTAINING PROTEIN 7"/>
    <property type="match status" value="1"/>
</dbReference>
<dbReference type="Pfam" id="PF08356">
    <property type="entry name" value="EF_assoc_2"/>
    <property type="match status" value="1"/>
</dbReference>
<dbReference type="Pfam" id="PF00071">
    <property type="entry name" value="Ras"/>
    <property type="match status" value="1"/>
</dbReference>
<dbReference type="PIRSF" id="PIRSF037488">
    <property type="entry name" value="Mt_Rho_GTPase"/>
    <property type="match status" value="1"/>
</dbReference>
<dbReference type="PRINTS" id="PR00449">
    <property type="entry name" value="RASTRNSFRMNG"/>
</dbReference>
<dbReference type="SMART" id="SM00175">
    <property type="entry name" value="RAB"/>
    <property type="match status" value="1"/>
</dbReference>
<dbReference type="SMART" id="SM00173">
    <property type="entry name" value="RAS"/>
    <property type="match status" value="1"/>
</dbReference>
<dbReference type="SMART" id="SM00174">
    <property type="entry name" value="RHO"/>
    <property type="match status" value="1"/>
</dbReference>
<dbReference type="SUPFAM" id="SSF47473">
    <property type="entry name" value="EF-hand"/>
    <property type="match status" value="1"/>
</dbReference>
<dbReference type="SUPFAM" id="SSF52540">
    <property type="entry name" value="P-loop containing nucleoside triphosphate hydrolases"/>
    <property type="match status" value="2"/>
</dbReference>
<dbReference type="PROSITE" id="PS00018">
    <property type="entry name" value="EF_HAND_1"/>
    <property type="match status" value="2"/>
</dbReference>
<dbReference type="PROSITE" id="PS50222">
    <property type="entry name" value="EF_HAND_2"/>
    <property type="match status" value="2"/>
</dbReference>
<dbReference type="PROSITE" id="PS51423">
    <property type="entry name" value="MIRO"/>
    <property type="match status" value="2"/>
</dbReference>
<reference key="1">
    <citation type="journal article" date="2004" name="Cytogenet. Genome Res.">
        <title>Cloning and characterization of the mouse Arht2 gene which encodes a putative atypical GTPase.</title>
        <authorList>
            <person name="Shan Y."/>
            <person name="Hexige S."/>
            <person name="Guo Z."/>
            <person name="Wan B."/>
            <person name="Chen K."/>
            <person name="Chen X."/>
            <person name="Ma L."/>
            <person name="Huang C."/>
            <person name="Zhao S."/>
            <person name="Yu L."/>
        </authorList>
    </citation>
    <scope>NUCLEOTIDE SEQUENCE [MRNA]</scope>
</reference>
<organism>
    <name type="scientific">Sus scrofa</name>
    <name type="common">Pig</name>
    <dbReference type="NCBI Taxonomy" id="9823"/>
    <lineage>
        <taxon>Eukaryota</taxon>
        <taxon>Metazoa</taxon>
        <taxon>Chordata</taxon>
        <taxon>Craniata</taxon>
        <taxon>Vertebrata</taxon>
        <taxon>Euteleostomi</taxon>
        <taxon>Mammalia</taxon>
        <taxon>Eutheria</taxon>
        <taxon>Laurasiatheria</taxon>
        <taxon>Artiodactyla</taxon>
        <taxon>Suina</taxon>
        <taxon>Suidae</taxon>
        <taxon>Sus</taxon>
    </lineage>
</organism>
<keyword id="KW-0106">Calcium</keyword>
<keyword id="KW-0342">GTP-binding</keyword>
<keyword id="KW-0378">Hydrolase</keyword>
<keyword id="KW-1017">Isopeptide bond</keyword>
<keyword id="KW-0460">Magnesium</keyword>
<keyword id="KW-0472">Membrane</keyword>
<keyword id="KW-0479">Metal-binding</keyword>
<keyword id="KW-0496">Mitochondrion</keyword>
<keyword id="KW-1000">Mitochondrion outer membrane</keyword>
<keyword id="KW-0547">Nucleotide-binding</keyword>
<keyword id="KW-1185">Reference proteome</keyword>
<keyword id="KW-0677">Repeat</keyword>
<keyword id="KW-0812">Transmembrane</keyword>
<keyword id="KW-1133">Transmembrane helix</keyword>
<keyword id="KW-0832">Ubl conjugation</keyword>
<comment type="function">
    <text evidence="1 2">Atypical mitochondrial nucleoside-triphosphatase (NTPase) involved in mitochondrial trafficking. Probably involved in control of anterograde transport of mitochondria and their subcellular distribution. Can hydrolyze GTP, ATP and UTP (By similarity).</text>
</comment>
<comment type="catalytic activity">
    <reaction evidence="2">
        <text>GTP + H2O = GDP + phosphate + H(+)</text>
        <dbReference type="Rhea" id="RHEA:19669"/>
        <dbReference type="ChEBI" id="CHEBI:15377"/>
        <dbReference type="ChEBI" id="CHEBI:15378"/>
        <dbReference type="ChEBI" id="CHEBI:37565"/>
        <dbReference type="ChEBI" id="CHEBI:43474"/>
        <dbReference type="ChEBI" id="CHEBI:58189"/>
    </reaction>
    <physiologicalReaction direction="left-to-right" evidence="2">
        <dbReference type="Rhea" id="RHEA:19670"/>
    </physiologicalReaction>
</comment>
<comment type="catalytic activity">
    <reaction evidence="1">
        <text>ATP + H2O = ADP + phosphate + H(+)</text>
        <dbReference type="Rhea" id="RHEA:13065"/>
        <dbReference type="ChEBI" id="CHEBI:15377"/>
        <dbReference type="ChEBI" id="CHEBI:15378"/>
        <dbReference type="ChEBI" id="CHEBI:30616"/>
        <dbReference type="ChEBI" id="CHEBI:43474"/>
        <dbReference type="ChEBI" id="CHEBI:456216"/>
    </reaction>
    <physiologicalReaction direction="left-to-right" evidence="1">
        <dbReference type="Rhea" id="RHEA:13066"/>
    </physiologicalReaction>
</comment>
<comment type="catalytic activity">
    <reaction evidence="1">
        <text>UTP + H2O = UDP + phosphate + H(+)</text>
        <dbReference type="Rhea" id="RHEA:64900"/>
        <dbReference type="ChEBI" id="CHEBI:15377"/>
        <dbReference type="ChEBI" id="CHEBI:15378"/>
        <dbReference type="ChEBI" id="CHEBI:43474"/>
        <dbReference type="ChEBI" id="CHEBI:46398"/>
        <dbReference type="ChEBI" id="CHEBI:58223"/>
    </reaction>
    <physiologicalReaction direction="left-to-right" evidence="1">
        <dbReference type="Rhea" id="RHEA:64901"/>
    </physiologicalReaction>
</comment>
<comment type="subunit">
    <text evidence="1 3">Homodimer (By similarity). Interacts with the kinesin-binding proteins TRAK1/OIP106 and TRAK2/GRIF1, forming a link between mitochondria and the trafficking apparatus of the microtubules (By similarity). Interacts with ARMCX3 (By similarity). Found in a complex with KIF5B, OGT, RHOT1 and TRAK1 (By similarity).</text>
</comment>
<comment type="subcellular location">
    <subcellularLocation>
        <location evidence="1">Mitochondrion outer membrane</location>
        <topology evidence="1">Single-pass type IV membrane protein</topology>
    </subcellularLocation>
    <text evidence="1">Colocalizes with MGARP and RHOT2 at the mitochondria.</text>
</comment>
<comment type="domain">
    <text evidence="1">The Miro 2 domain is necessary for efficient ubiquitination by PRKN.</text>
</comment>
<comment type="PTM">
    <text evidence="1">Ubiquitinated by PRKN in a PINK1-dependent manner, leading to its degradation.</text>
</comment>
<comment type="similarity">
    <text evidence="6 8">Belongs to the mitochondrial Rho GTPase family.</text>
</comment>
<name>MIRO2_PIG</name>